<protein>
    <recommendedName>
        <fullName evidence="1">Small ribosomal subunit protein uS5</fullName>
    </recommendedName>
    <alternativeName>
        <fullName evidence="2">30S ribosomal protein S5</fullName>
    </alternativeName>
</protein>
<keyword id="KW-0687">Ribonucleoprotein</keyword>
<keyword id="KW-0689">Ribosomal protein</keyword>
<keyword id="KW-0694">RNA-binding</keyword>
<keyword id="KW-0699">rRNA-binding</keyword>
<evidence type="ECO:0000255" key="1">
    <source>
        <dbReference type="HAMAP-Rule" id="MF_01307"/>
    </source>
</evidence>
<evidence type="ECO:0000305" key="2"/>
<proteinExistence type="inferred from homology"/>
<sequence length="168" mass="17816">MAQKRIDPKGLDLKERVVNINRVAKVVKGGKRLKFSAIVVVGDENGHVGAGHGKAAEIPDAIRKAIEDAKKHLIEVPIVGTTIPHEAIGDFGASKVLIKPAPEGTGVIAGGAVRAVCELAGIKDIRTKSLGSNNPANVVHATIEALKQLRRPEEVARIRGKTLEEILK</sequence>
<name>RS5_CALBD</name>
<dbReference type="EMBL" id="CP001393">
    <property type="protein sequence ID" value="ACM60822.1"/>
    <property type="molecule type" value="Genomic_DNA"/>
</dbReference>
<dbReference type="RefSeq" id="WP_013402934.1">
    <property type="nucleotide sequence ID" value="NC_012034.1"/>
</dbReference>
<dbReference type="SMR" id="B9MKG4"/>
<dbReference type="STRING" id="521460.Athe_1728"/>
<dbReference type="GeneID" id="31773085"/>
<dbReference type="KEGG" id="ate:Athe_1728"/>
<dbReference type="eggNOG" id="COG0098">
    <property type="taxonomic scope" value="Bacteria"/>
</dbReference>
<dbReference type="HOGENOM" id="CLU_065898_2_2_9"/>
<dbReference type="Proteomes" id="UP000007723">
    <property type="component" value="Chromosome"/>
</dbReference>
<dbReference type="GO" id="GO:0015935">
    <property type="term" value="C:small ribosomal subunit"/>
    <property type="evidence" value="ECO:0007669"/>
    <property type="project" value="InterPro"/>
</dbReference>
<dbReference type="GO" id="GO:0019843">
    <property type="term" value="F:rRNA binding"/>
    <property type="evidence" value="ECO:0007669"/>
    <property type="project" value="UniProtKB-UniRule"/>
</dbReference>
<dbReference type="GO" id="GO:0003735">
    <property type="term" value="F:structural constituent of ribosome"/>
    <property type="evidence" value="ECO:0007669"/>
    <property type="project" value="InterPro"/>
</dbReference>
<dbReference type="GO" id="GO:0006412">
    <property type="term" value="P:translation"/>
    <property type="evidence" value="ECO:0007669"/>
    <property type="project" value="UniProtKB-UniRule"/>
</dbReference>
<dbReference type="FunFam" id="3.30.160.20:FF:000001">
    <property type="entry name" value="30S ribosomal protein S5"/>
    <property type="match status" value="1"/>
</dbReference>
<dbReference type="FunFam" id="3.30.230.10:FF:000002">
    <property type="entry name" value="30S ribosomal protein S5"/>
    <property type="match status" value="1"/>
</dbReference>
<dbReference type="Gene3D" id="3.30.160.20">
    <property type="match status" value="1"/>
</dbReference>
<dbReference type="Gene3D" id="3.30.230.10">
    <property type="match status" value="1"/>
</dbReference>
<dbReference type="HAMAP" id="MF_01307_B">
    <property type="entry name" value="Ribosomal_uS5_B"/>
    <property type="match status" value="1"/>
</dbReference>
<dbReference type="InterPro" id="IPR020568">
    <property type="entry name" value="Ribosomal_Su5_D2-typ_SF"/>
</dbReference>
<dbReference type="InterPro" id="IPR000851">
    <property type="entry name" value="Ribosomal_uS5"/>
</dbReference>
<dbReference type="InterPro" id="IPR005712">
    <property type="entry name" value="Ribosomal_uS5_bac-type"/>
</dbReference>
<dbReference type="InterPro" id="IPR005324">
    <property type="entry name" value="Ribosomal_uS5_C"/>
</dbReference>
<dbReference type="InterPro" id="IPR013810">
    <property type="entry name" value="Ribosomal_uS5_N"/>
</dbReference>
<dbReference type="InterPro" id="IPR018192">
    <property type="entry name" value="Ribosomal_uS5_N_CS"/>
</dbReference>
<dbReference type="InterPro" id="IPR014721">
    <property type="entry name" value="Ribsml_uS5_D2-typ_fold_subgr"/>
</dbReference>
<dbReference type="NCBIfam" id="TIGR01021">
    <property type="entry name" value="rpsE_bact"/>
    <property type="match status" value="1"/>
</dbReference>
<dbReference type="PANTHER" id="PTHR48277">
    <property type="entry name" value="MITOCHONDRIAL RIBOSOMAL PROTEIN S5"/>
    <property type="match status" value="1"/>
</dbReference>
<dbReference type="PANTHER" id="PTHR48277:SF1">
    <property type="entry name" value="MITOCHONDRIAL RIBOSOMAL PROTEIN S5"/>
    <property type="match status" value="1"/>
</dbReference>
<dbReference type="Pfam" id="PF00333">
    <property type="entry name" value="Ribosomal_S5"/>
    <property type="match status" value="1"/>
</dbReference>
<dbReference type="Pfam" id="PF03719">
    <property type="entry name" value="Ribosomal_S5_C"/>
    <property type="match status" value="1"/>
</dbReference>
<dbReference type="SUPFAM" id="SSF54768">
    <property type="entry name" value="dsRNA-binding domain-like"/>
    <property type="match status" value="1"/>
</dbReference>
<dbReference type="SUPFAM" id="SSF54211">
    <property type="entry name" value="Ribosomal protein S5 domain 2-like"/>
    <property type="match status" value="1"/>
</dbReference>
<dbReference type="PROSITE" id="PS00585">
    <property type="entry name" value="RIBOSOMAL_S5"/>
    <property type="match status" value="1"/>
</dbReference>
<dbReference type="PROSITE" id="PS50881">
    <property type="entry name" value="S5_DSRBD"/>
    <property type="match status" value="1"/>
</dbReference>
<accession>B9MKG4</accession>
<feature type="chain" id="PRO_1000165440" description="Small ribosomal subunit protein uS5">
    <location>
        <begin position="1"/>
        <end position="168"/>
    </location>
</feature>
<feature type="domain" description="S5 DRBM" evidence="1">
    <location>
        <begin position="13"/>
        <end position="76"/>
    </location>
</feature>
<reference key="1">
    <citation type="submission" date="2009-01" db="EMBL/GenBank/DDBJ databases">
        <title>Complete sequence of chromosome of Caldicellulosiruptor becscii DSM 6725.</title>
        <authorList>
            <person name="Lucas S."/>
            <person name="Copeland A."/>
            <person name="Lapidus A."/>
            <person name="Glavina del Rio T."/>
            <person name="Tice H."/>
            <person name="Bruce D."/>
            <person name="Goodwin L."/>
            <person name="Pitluck S."/>
            <person name="Sims D."/>
            <person name="Meincke L."/>
            <person name="Brettin T."/>
            <person name="Detter J.C."/>
            <person name="Han C."/>
            <person name="Larimer F."/>
            <person name="Land M."/>
            <person name="Hauser L."/>
            <person name="Kyrpides N."/>
            <person name="Ovchinnikova G."/>
            <person name="Kataeva I."/>
            <person name="Adams M.W.W."/>
        </authorList>
    </citation>
    <scope>NUCLEOTIDE SEQUENCE [LARGE SCALE GENOMIC DNA]</scope>
    <source>
        <strain>ATCC BAA-1888 / DSM 6725 / KCTC 15123 / Z-1320</strain>
    </source>
</reference>
<comment type="function">
    <text evidence="1">With S4 and S12 plays an important role in translational accuracy.</text>
</comment>
<comment type="function">
    <text evidence="1">Located at the back of the 30S subunit body where it stabilizes the conformation of the head with respect to the body.</text>
</comment>
<comment type="subunit">
    <text evidence="1">Part of the 30S ribosomal subunit. Contacts proteins S4 and S8.</text>
</comment>
<comment type="domain">
    <text>The N-terminal domain interacts with the head of the 30S subunit; the C-terminal domain interacts with the body and contacts protein S4. The interaction surface between S4 and S5 is involved in control of translational fidelity.</text>
</comment>
<comment type="similarity">
    <text evidence="1">Belongs to the universal ribosomal protein uS5 family.</text>
</comment>
<gene>
    <name evidence="1" type="primary">rpsE</name>
    <name type="ordered locus">Athe_1728</name>
</gene>
<organism>
    <name type="scientific">Caldicellulosiruptor bescii (strain ATCC BAA-1888 / DSM 6725 / KCTC 15123 / Z-1320)</name>
    <name type="common">Anaerocellum thermophilum</name>
    <dbReference type="NCBI Taxonomy" id="521460"/>
    <lineage>
        <taxon>Bacteria</taxon>
        <taxon>Bacillati</taxon>
        <taxon>Bacillota</taxon>
        <taxon>Bacillota incertae sedis</taxon>
        <taxon>Caldicellulosiruptorales</taxon>
        <taxon>Caldicellulosiruptoraceae</taxon>
        <taxon>Caldicellulosiruptor</taxon>
    </lineage>
</organism>